<organism>
    <name type="scientific">Azobacteroides pseudotrichonymphae genomovar. CFP2</name>
    <dbReference type="NCBI Taxonomy" id="511995"/>
    <lineage>
        <taxon>Bacteria</taxon>
        <taxon>Pseudomonadati</taxon>
        <taxon>Bacteroidota</taxon>
        <taxon>Bacteroidia</taxon>
        <taxon>Bacteroidales</taxon>
        <taxon>Candidatus Azobacteroides</taxon>
    </lineage>
</organism>
<name>RNZ_AZOPC</name>
<gene>
    <name evidence="1" type="primary">rnz</name>
    <name type="ordered locus">CFPG_099</name>
</gene>
<evidence type="ECO:0000255" key="1">
    <source>
        <dbReference type="HAMAP-Rule" id="MF_01818"/>
    </source>
</evidence>
<accession>B6YQ90</accession>
<reference key="1">
    <citation type="journal article" date="2008" name="Science">
        <title>Genome of an endosymbiont coupling N2 fixation to cellulolysis within RT protist cells in termite gut.</title>
        <authorList>
            <person name="Hongoh Y."/>
            <person name="Sharma V.K."/>
            <person name="Prakash T."/>
            <person name="Noda S."/>
            <person name="Toh H."/>
            <person name="Taylor T.D."/>
            <person name="Kudo T."/>
            <person name="Sakaki Y."/>
            <person name="Toyoda A."/>
            <person name="Hattori M."/>
            <person name="Ohkuma M."/>
        </authorList>
    </citation>
    <scope>NUCLEOTIDE SEQUENCE [LARGE SCALE GENOMIC DNA]</scope>
</reference>
<sequence length="289" mass="32831">MRQFEVNILGCGSALPATRHSLSSQIVNLNGELYMIDCGEGSQLQFRAMNLKFQRLNHIFISHLHGDHCFGLLGLVSMFVLLGRTVDLCIYSHPDTKCLFQPLIKYFFKELPFQVVFHPFDPTCSGLIFEDQVLRVFTIPLKHRVPTVGFLFEEKPIYLFDNNMQRGNFVTSGSQTVSSSCLSKLASFSCRYAYCSDTVYYEEIIPLITGVDLLYHEATYSNKDLARAKETYHSSAQQASLIARAANVKKLMLGHFSARYPDETFLLKEAQKIFPNTILASERMILPII</sequence>
<comment type="function">
    <text evidence="1">Zinc phosphodiesterase, which displays some tRNA 3'-processing endonuclease activity. Probably involved in tRNA maturation, by removing a 3'-trailer from precursor tRNA.</text>
</comment>
<comment type="catalytic activity">
    <reaction evidence="1">
        <text>Endonucleolytic cleavage of RNA, removing extra 3' nucleotides from tRNA precursor, generating 3' termini of tRNAs. A 3'-hydroxy group is left at the tRNA terminus and a 5'-phosphoryl group is left at the trailer molecule.</text>
        <dbReference type="EC" id="3.1.26.11"/>
    </reaction>
</comment>
<comment type="cofactor">
    <cofactor evidence="1">
        <name>Zn(2+)</name>
        <dbReference type="ChEBI" id="CHEBI:29105"/>
    </cofactor>
    <text evidence="1">Binds 2 Zn(2+) ions.</text>
</comment>
<comment type="subunit">
    <text evidence="1">Homodimer.</text>
</comment>
<comment type="similarity">
    <text evidence="1">Belongs to the RNase Z family.</text>
</comment>
<keyword id="KW-0255">Endonuclease</keyword>
<keyword id="KW-0378">Hydrolase</keyword>
<keyword id="KW-0479">Metal-binding</keyword>
<keyword id="KW-0540">Nuclease</keyword>
<keyword id="KW-1185">Reference proteome</keyword>
<keyword id="KW-0819">tRNA processing</keyword>
<keyword id="KW-0862">Zinc</keyword>
<protein>
    <recommendedName>
        <fullName evidence="1">Ribonuclease Z</fullName>
        <shortName evidence="1">RNase Z</shortName>
        <ecNumber evidence="1">3.1.26.11</ecNumber>
    </recommendedName>
    <alternativeName>
        <fullName evidence="1">tRNA 3 endonuclease</fullName>
    </alternativeName>
    <alternativeName>
        <fullName evidence="1">tRNase Z</fullName>
    </alternativeName>
</protein>
<feature type="chain" id="PRO_1000187927" description="Ribonuclease Z">
    <location>
        <begin position="1"/>
        <end position="289"/>
    </location>
</feature>
<feature type="active site" description="Proton acceptor" evidence="1">
    <location>
        <position position="67"/>
    </location>
</feature>
<feature type="binding site" evidence="1">
    <location>
        <position position="63"/>
    </location>
    <ligand>
        <name>Zn(2+)</name>
        <dbReference type="ChEBI" id="CHEBI:29105"/>
        <label>1</label>
        <note>catalytic</note>
    </ligand>
</feature>
<feature type="binding site" evidence="1">
    <location>
        <position position="65"/>
    </location>
    <ligand>
        <name>Zn(2+)</name>
        <dbReference type="ChEBI" id="CHEBI:29105"/>
        <label>1</label>
        <note>catalytic</note>
    </ligand>
</feature>
<feature type="binding site" evidence="1">
    <location>
        <position position="67"/>
    </location>
    <ligand>
        <name>Zn(2+)</name>
        <dbReference type="ChEBI" id="CHEBI:29105"/>
        <label>2</label>
        <note>catalytic</note>
    </ligand>
</feature>
<feature type="binding site" evidence="1">
    <location>
        <position position="68"/>
    </location>
    <ligand>
        <name>Zn(2+)</name>
        <dbReference type="ChEBI" id="CHEBI:29105"/>
        <label>2</label>
        <note>catalytic</note>
    </ligand>
</feature>
<feature type="binding site" evidence="1">
    <location>
        <position position="143"/>
    </location>
    <ligand>
        <name>Zn(2+)</name>
        <dbReference type="ChEBI" id="CHEBI:29105"/>
        <label>1</label>
        <note>catalytic</note>
    </ligand>
</feature>
<feature type="binding site" evidence="1">
    <location>
        <position position="197"/>
    </location>
    <ligand>
        <name>Zn(2+)</name>
        <dbReference type="ChEBI" id="CHEBI:29105"/>
        <label>1</label>
        <note>catalytic</note>
    </ligand>
</feature>
<feature type="binding site" evidence="1">
    <location>
        <position position="197"/>
    </location>
    <ligand>
        <name>Zn(2+)</name>
        <dbReference type="ChEBI" id="CHEBI:29105"/>
        <label>2</label>
        <note>catalytic</note>
    </ligand>
</feature>
<feature type="binding site" evidence="1">
    <location>
        <position position="255"/>
    </location>
    <ligand>
        <name>Zn(2+)</name>
        <dbReference type="ChEBI" id="CHEBI:29105"/>
        <label>2</label>
        <note>catalytic</note>
    </ligand>
</feature>
<proteinExistence type="inferred from homology"/>
<dbReference type="EC" id="3.1.26.11" evidence="1"/>
<dbReference type="EMBL" id="AP010656">
    <property type="protein sequence ID" value="BAG83362.1"/>
    <property type="molecule type" value="Genomic_DNA"/>
</dbReference>
<dbReference type="RefSeq" id="WP_012573123.1">
    <property type="nucleotide sequence ID" value="NC_011565.1"/>
</dbReference>
<dbReference type="SMR" id="B6YQ90"/>
<dbReference type="STRING" id="511995.CFPG_099"/>
<dbReference type="KEGG" id="aps:CFPG_099"/>
<dbReference type="eggNOG" id="COG1234">
    <property type="taxonomic scope" value="Bacteria"/>
</dbReference>
<dbReference type="HOGENOM" id="CLU_031317_2_1_10"/>
<dbReference type="OrthoDB" id="9800940at2"/>
<dbReference type="Proteomes" id="UP000000723">
    <property type="component" value="Chromosome"/>
</dbReference>
<dbReference type="GO" id="GO:0042781">
    <property type="term" value="F:3'-tRNA processing endoribonuclease activity"/>
    <property type="evidence" value="ECO:0007669"/>
    <property type="project" value="UniProtKB-UniRule"/>
</dbReference>
<dbReference type="GO" id="GO:0008270">
    <property type="term" value="F:zinc ion binding"/>
    <property type="evidence" value="ECO:0007669"/>
    <property type="project" value="UniProtKB-UniRule"/>
</dbReference>
<dbReference type="CDD" id="cd07717">
    <property type="entry name" value="RNaseZ_ZiPD-like_MBL-fold"/>
    <property type="match status" value="1"/>
</dbReference>
<dbReference type="Gene3D" id="3.60.15.10">
    <property type="entry name" value="Ribonuclease Z/Hydroxyacylglutathione hydrolase-like"/>
    <property type="match status" value="1"/>
</dbReference>
<dbReference type="HAMAP" id="MF_01818">
    <property type="entry name" value="RNase_Z_BN"/>
    <property type="match status" value="1"/>
</dbReference>
<dbReference type="InterPro" id="IPR001279">
    <property type="entry name" value="Metallo-B-lactamas"/>
</dbReference>
<dbReference type="InterPro" id="IPR036866">
    <property type="entry name" value="RibonucZ/Hydroxyglut_hydro"/>
</dbReference>
<dbReference type="InterPro" id="IPR013471">
    <property type="entry name" value="RNase_Z/BN"/>
</dbReference>
<dbReference type="NCBIfam" id="NF000801">
    <property type="entry name" value="PRK00055.1-3"/>
    <property type="match status" value="1"/>
</dbReference>
<dbReference type="PANTHER" id="PTHR46018">
    <property type="entry name" value="ZINC PHOSPHODIESTERASE ELAC PROTEIN 1"/>
    <property type="match status" value="1"/>
</dbReference>
<dbReference type="PANTHER" id="PTHR46018:SF2">
    <property type="entry name" value="ZINC PHOSPHODIESTERASE ELAC PROTEIN 1"/>
    <property type="match status" value="1"/>
</dbReference>
<dbReference type="Pfam" id="PF12706">
    <property type="entry name" value="Lactamase_B_2"/>
    <property type="match status" value="1"/>
</dbReference>
<dbReference type="SUPFAM" id="SSF56281">
    <property type="entry name" value="Metallo-hydrolase/oxidoreductase"/>
    <property type="match status" value="1"/>
</dbReference>